<protein>
    <recommendedName>
        <fullName evidence="1">Protein-L-isoaspartate O-methyltransferase</fullName>
        <ecNumber evidence="1">2.1.1.77</ecNumber>
    </recommendedName>
    <alternativeName>
        <fullName evidence="1">L-isoaspartyl protein carboxyl methyltransferase</fullName>
    </alternativeName>
    <alternativeName>
        <fullName evidence="1">Protein L-isoaspartyl methyltransferase</fullName>
    </alternativeName>
    <alternativeName>
        <fullName evidence="1">Protein-beta-aspartate methyltransferase</fullName>
        <shortName evidence="1">PIMT</shortName>
    </alternativeName>
</protein>
<dbReference type="EC" id="2.1.1.77" evidence="1"/>
<dbReference type="EMBL" id="CP000647">
    <property type="protein sequence ID" value="ABR78506.1"/>
    <property type="molecule type" value="Genomic_DNA"/>
</dbReference>
<dbReference type="RefSeq" id="WP_002915108.1">
    <property type="nucleotide sequence ID" value="NC_009648.1"/>
</dbReference>
<dbReference type="SMR" id="A6TD35"/>
<dbReference type="STRING" id="272620.KPN_03105"/>
<dbReference type="PaxDb" id="272620-KPN_03105"/>
<dbReference type="EnsemblBacteria" id="ABR78506">
    <property type="protein sequence ID" value="ABR78506"/>
    <property type="gene ID" value="KPN_03105"/>
</dbReference>
<dbReference type="KEGG" id="kpn:KPN_03105"/>
<dbReference type="HOGENOM" id="CLU_055432_2_0_6"/>
<dbReference type="Proteomes" id="UP000000265">
    <property type="component" value="Chromosome"/>
</dbReference>
<dbReference type="GO" id="GO:0005737">
    <property type="term" value="C:cytoplasm"/>
    <property type="evidence" value="ECO:0007669"/>
    <property type="project" value="UniProtKB-SubCell"/>
</dbReference>
<dbReference type="GO" id="GO:0004719">
    <property type="term" value="F:protein-L-isoaspartate (D-aspartate) O-methyltransferase activity"/>
    <property type="evidence" value="ECO:0007669"/>
    <property type="project" value="UniProtKB-UniRule"/>
</dbReference>
<dbReference type="GO" id="GO:0032259">
    <property type="term" value="P:methylation"/>
    <property type="evidence" value="ECO:0007669"/>
    <property type="project" value="UniProtKB-KW"/>
</dbReference>
<dbReference type="GO" id="GO:0036211">
    <property type="term" value="P:protein modification process"/>
    <property type="evidence" value="ECO:0007669"/>
    <property type="project" value="UniProtKB-UniRule"/>
</dbReference>
<dbReference type="GO" id="GO:0030091">
    <property type="term" value="P:protein repair"/>
    <property type="evidence" value="ECO:0007669"/>
    <property type="project" value="UniProtKB-UniRule"/>
</dbReference>
<dbReference type="CDD" id="cd02440">
    <property type="entry name" value="AdoMet_MTases"/>
    <property type="match status" value="1"/>
</dbReference>
<dbReference type="FunFam" id="3.40.50.150:FF:000010">
    <property type="entry name" value="Protein-L-isoaspartate O-methyltransferase"/>
    <property type="match status" value="1"/>
</dbReference>
<dbReference type="Gene3D" id="3.40.50.150">
    <property type="entry name" value="Vaccinia Virus protein VP39"/>
    <property type="match status" value="1"/>
</dbReference>
<dbReference type="HAMAP" id="MF_00090">
    <property type="entry name" value="PIMT"/>
    <property type="match status" value="1"/>
</dbReference>
<dbReference type="InterPro" id="IPR000682">
    <property type="entry name" value="PCMT"/>
</dbReference>
<dbReference type="InterPro" id="IPR029063">
    <property type="entry name" value="SAM-dependent_MTases_sf"/>
</dbReference>
<dbReference type="NCBIfam" id="TIGR00080">
    <property type="entry name" value="pimt"/>
    <property type="match status" value="1"/>
</dbReference>
<dbReference type="NCBIfam" id="NF001453">
    <property type="entry name" value="PRK00312.1"/>
    <property type="match status" value="1"/>
</dbReference>
<dbReference type="PANTHER" id="PTHR11579">
    <property type="entry name" value="PROTEIN-L-ISOASPARTATE O-METHYLTRANSFERASE"/>
    <property type="match status" value="1"/>
</dbReference>
<dbReference type="PANTHER" id="PTHR11579:SF0">
    <property type="entry name" value="PROTEIN-L-ISOASPARTATE(D-ASPARTATE) O-METHYLTRANSFERASE"/>
    <property type="match status" value="1"/>
</dbReference>
<dbReference type="Pfam" id="PF01135">
    <property type="entry name" value="PCMT"/>
    <property type="match status" value="1"/>
</dbReference>
<dbReference type="SUPFAM" id="SSF53335">
    <property type="entry name" value="S-adenosyl-L-methionine-dependent methyltransferases"/>
    <property type="match status" value="1"/>
</dbReference>
<dbReference type="PROSITE" id="PS01279">
    <property type="entry name" value="PCMT"/>
    <property type="match status" value="1"/>
</dbReference>
<reference key="1">
    <citation type="submission" date="2006-09" db="EMBL/GenBank/DDBJ databases">
        <authorList>
            <consortium name="The Klebsiella pneumonia Genome Sequencing Project"/>
            <person name="McClelland M."/>
            <person name="Sanderson E.K."/>
            <person name="Spieth J."/>
            <person name="Clifton W.S."/>
            <person name="Latreille P."/>
            <person name="Sabo A."/>
            <person name="Pepin K."/>
            <person name="Bhonagiri V."/>
            <person name="Porwollik S."/>
            <person name="Ali J."/>
            <person name="Wilson R.K."/>
        </authorList>
    </citation>
    <scope>NUCLEOTIDE SEQUENCE [LARGE SCALE GENOMIC DNA]</scope>
    <source>
        <strain>ATCC 700721 / MGH 78578</strain>
    </source>
</reference>
<gene>
    <name evidence="1" type="primary">pcm</name>
    <name type="ordered locus">KPN78578_30450</name>
    <name type="ORF">KPN_03105</name>
</gene>
<evidence type="ECO:0000255" key="1">
    <source>
        <dbReference type="HAMAP-Rule" id="MF_00090"/>
    </source>
</evidence>
<feature type="chain" id="PRO_1000004819" description="Protein-L-isoaspartate O-methyltransferase">
    <location>
        <begin position="1"/>
        <end position="208"/>
    </location>
</feature>
<feature type="active site" evidence="1">
    <location>
        <position position="59"/>
    </location>
</feature>
<sequence length="208" mass="23406">MVSKRVESLLNQLRTQGIVDERVLEAIALVPREKFVDEAFEHKAWENTALPIGQGQTISQPYMVARMTELLTLTPESRVLEIGTGSGYQTAILAHLVHHVCSVERIKSLQWQARRRLKQLDLHNVSTRHGDGWQGWQARAPFDAIIVTAAPPEIPTALLAQLDDDGVLVLPVGEEHQFLKRIRRRGNEFIIDTVEAVRFVPLVKGELA</sequence>
<name>PIMT_KLEP7</name>
<keyword id="KW-0963">Cytoplasm</keyword>
<keyword id="KW-0489">Methyltransferase</keyword>
<keyword id="KW-0949">S-adenosyl-L-methionine</keyword>
<keyword id="KW-0808">Transferase</keyword>
<comment type="function">
    <text evidence="1">Catalyzes the methyl esterification of L-isoaspartyl residues in peptides and proteins that result from spontaneous decomposition of normal L-aspartyl and L-asparaginyl residues. It plays a role in the repair and/or degradation of damaged proteins.</text>
</comment>
<comment type="catalytic activity">
    <reaction evidence="1">
        <text>[protein]-L-isoaspartate + S-adenosyl-L-methionine = [protein]-L-isoaspartate alpha-methyl ester + S-adenosyl-L-homocysteine</text>
        <dbReference type="Rhea" id="RHEA:12705"/>
        <dbReference type="Rhea" id="RHEA-COMP:12143"/>
        <dbReference type="Rhea" id="RHEA-COMP:12144"/>
        <dbReference type="ChEBI" id="CHEBI:57856"/>
        <dbReference type="ChEBI" id="CHEBI:59789"/>
        <dbReference type="ChEBI" id="CHEBI:90596"/>
        <dbReference type="ChEBI" id="CHEBI:90598"/>
        <dbReference type="EC" id="2.1.1.77"/>
    </reaction>
</comment>
<comment type="subcellular location">
    <subcellularLocation>
        <location evidence="1">Cytoplasm</location>
    </subcellularLocation>
</comment>
<comment type="similarity">
    <text evidence="1">Belongs to the methyltransferase superfamily. L-isoaspartyl/D-aspartyl protein methyltransferase family.</text>
</comment>
<organism>
    <name type="scientific">Klebsiella pneumoniae subsp. pneumoniae (strain ATCC 700721 / MGH 78578)</name>
    <dbReference type="NCBI Taxonomy" id="272620"/>
    <lineage>
        <taxon>Bacteria</taxon>
        <taxon>Pseudomonadati</taxon>
        <taxon>Pseudomonadota</taxon>
        <taxon>Gammaproteobacteria</taxon>
        <taxon>Enterobacterales</taxon>
        <taxon>Enterobacteriaceae</taxon>
        <taxon>Klebsiella/Raoultella group</taxon>
        <taxon>Klebsiella</taxon>
        <taxon>Klebsiella pneumoniae complex</taxon>
    </lineage>
</organism>
<proteinExistence type="inferred from homology"/>
<accession>A6TD35</accession>